<evidence type="ECO:0000255" key="1">
    <source>
        <dbReference type="PROSITE-ProRule" id="PRU01332"/>
    </source>
</evidence>
<evidence type="ECO:0000256" key="2">
    <source>
        <dbReference type="SAM" id="MobiDB-lite"/>
    </source>
</evidence>
<evidence type="ECO:0000269" key="3">
    <source>
    </source>
</evidence>
<evidence type="ECO:0000305" key="4"/>
<proteinExistence type="inferred from homology"/>
<keyword id="KW-1035">Host cytoplasm</keyword>
<keyword id="KW-1048">Host nucleus</keyword>
<keyword id="KW-0479">Metal-binding</keyword>
<keyword id="KW-1185">Reference proteome</keyword>
<keyword id="KW-0862">Zinc</keyword>
<keyword id="KW-0863">Zinc-finger</keyword>
<name>UL52_HCMVA</name>
<feature type="chain" id="PRO_0000116022" description="Packaging protein UL32 homolog">
    <location>
        <begin position="1"/>
        <end position="668"/>
    </location>
</feature>
<feature type="region of interest" description="Disordered" evidence="2">
    <location>
        <begin position="1"/>
        <end position="35"/>
    </location>
</feature>
<feature type="region of interest" description="Zinc finger 1" evidence="1">
    <location>
        <begin position="200"/>
        <end position="282"/>
    </location>
</feature>
<feature type="region of interest" description="Disordered" evidence="2">
    <location>
        <begin position="401"/>
        <end position="430"/>
    </location>
</feature>
<feature type="region of interest" description="Zinc finger 2" evidence="1">
    <location>
        <begin position="459"/>
        <end position="574"/>
    </location>
</feature>
<feature type="compositionally biased region" description="Polar residues" evidence="2">
    <location>
        <begin position="1"/>
        <end position="10"/>
    </location>
</feature>
<feature type="compositionally biased region" description="Low complexity" evidence="2">
    <location>
        <begin position="19"/>
        <end position="35"/>
    </location>
</feature>
<feature type="compositionally biased region" description="Basic and acidic residues" evidence="2">
    <location>
        <begin position="410"/>
        <end position="419"/>
    </location>
</feature>
<feature type="binding site" evidence="1">
    <location>
        <position position="200"/>
    </location>
    <ligand>
        <name>Zn(2+)</name>
        <dbReference type="ChEBI" id="CHEBI:29105"/>
        <label>1</label>
    </ligand>
</feature>
<feature type="binding site" evidence="1">
    <location>
        <position position="203"/>
    </location>
    <ligand>
        <name>Zn(2+)</name>
        <dbReference type="ChEBI" id="CHEBI:29105"/>
        <label>1</label>
    </ligand>
</feature>
<feature type="binding site" evidence="1">
    <location>
        <position position="276"/>
    </location>
    <ligand>
        <name>Zn(2+)</name>
        <dbReference type="ChEBI" id="CHEBI:29105"/>
        <label>1</label>
    </ligand>
</feature>
<feature type="binding site" evidence="1">
    <location>
        <position position="282"/>
    </location>
    <ligand>
        <name>Zn(2+)</name>
        <dbReference type="ChEBI" id="CHEBI:29105"/>
        <label>1</label>
    </ligand>
</feature>
<feature type="binding site" evidence="1">
    <location>
        <position position="459"/>
    </location>
    <ligand>
        <name>Zn(2+)</name>
        <dbReference type="ChEBI" id="CHEBI:29105"/>
        <label>2</label>
    </ligand>
</feature>
<feature type="binding site" evidence="1">
    <location>
        <position position="462"/>
    </location>
    <ligand>
        <name>Zn(2+)</name>
        <dbReference type="ChEBI" id="CHEBI:29105"/>
        <label>2</label>
    </ligand>
</feature>
<feature type="binding site" evidence="1">
    <location>
        <position position="567"/>
    </location>
    <ligand>
        <name>Zn(2+)</name>
        <dbReference type="ChEBI" id="CHEBI:29105"/>
        <label>2</label>
    </ligand>
</feature>
<feature type="binding site" evidence="1">
    <location>
        <position position="574"/>
    </location>
    <ligand>
        <name>Zn(2+)</name>
        <dbReference type="ChEBI" id="CHEBI:29105"/>
        <label>2</label>
    </ligand>
</feature>
<gene>
    <name type="primary">UL52</name>
</gene>
<accession>P16793</accession>
<accession>Q7M6N1</accession>
<protein>
    <recommendedName>
        <fullName>Packaging protein UL32 homolog</fullName>
    </recommendedName>
    <alternativeName>
        <fullName>Protein HFRF1</fullName>
    </alternativeName>
</protein>
<dbReference type="EMBL" id="M17209">
    <property type="protein sequence ID" value="AAA46006.1"/>
    <property type="molecule type" value="Genomic_DNA"/>
</dbReference>
<dbReference type="EMBL" id="X17403">
    <property type="protein sequence ID" value="CAA35411.1"/>
    <property type="molecule type" value="Genomic_DNA"/>
</dbReference>
<dbReference type="EMBL" id="BK000394">
    <property type="protein sequence ID" value="DAA00157.1"/>
    <property type="molecule type" value="Genomic_DNA"/>
</dbReference>
<dbReference type="PIR" id="S09815">
    <property type="entry name" value="QQBEW1"/>
</dbReference>
<dbReference type="SMR" id="P16793"/>
<dbReference type="Proteomes" id="UP000008991">
    <property type="component" value="Segment"/>
</dbReference>
<dbReference type="Proteomes" id="UP000008992">
    <property type="component" value="Segment"/>
</dbReference>
<dbReference type="GO" id="GO:0030430">
    <property type="term" value="C:host cell cytoplasm"/>
    <property type="evidence" value="ECO:0007669"/>
    <property type="project" value="UniProtKB-SubCell"/>
</dbReference>
<dbReference type="GO" id="GO:0042025">
    <property type="term" value="C:host cell nucleus"/>
    <property type="evidence" value="ECO:0007669"/>
    <property type="project" value="UniProtKB-SubCell"/>
</dbReference>
<dbReference type="GO" id="GO:0019031">
    <property type="term" value="C:viral envelope"/>
    <property type="evidence" value="ECO:0007669"/>
    <property type="project" value="InterPro"/>
</dbReference>
<dbReference type="GO" id="GO:0008270">
    <property type="term" value="F:zinc ion binding"/>
    <property type="evidence" value="ECO:0007669"/>
    <property type="project" value="UniProtKB-KW"/>
</dbReference>
<dbReference type="InterPro" id="IPR002597">
    <property type="entry name" value="Herpes_env"/>
</dbReference>
<dbReference type="Pfam" id="PF01673">
    <property type="entry name" value="Herpes_env"/>
    <property type="match status" value="2"/>
</dbReference>
<dbReference type="PROSITE" id="PS51988">
    <property type="entry name" value="HERPESVIRUS_UL32"/>
    <property type="match status" value="1"/>
</dbReference>
<organismHost>
    <name type="scientific">Homo sapiens</name>
    <name type="common">Human</name>
    <dbReference type="NCBI Taxonomy" id="9606"/>
</organismHost>
<sequence length="668" mass="74121">MNPSTHVSSNGPTTPPHGPHTTFLPPTSPAPSTSSVAAATLCSPQRQAVSRYSGWSTEYTQWHSDLTTELLWHAHPRQVPMDEALAAAAAASYQVNPQHPANRYRHYEFQTLSLGTSEVDELLNCCAEETTCGGTQSTVLTNATNTTSCGGAVAGSSNVGPAGASAACDLDAELAGLETSAADFEQLRRLCAPLAIDTRCNLCAIISICLKQDCDQSWLLEYSLLCFKCSYAPRAALSTLIIMSEFTHLLQQHFSDLRIDDLFRHHVLTVFDFHLHFFINRCFEKQVGDAVDNENVTLNHLAVVRAMVMGEDTVPYNKPRRHPQQKQKNNPYHVEVPQELIDNFLEHSSPSRDRFVQLLFYMWAGTGVMSTTPLTELTHTKFARLDALSTASEREDARMMIEEEEDEEGGEKGGDDPGRHNGGGTSGGFSESTLKKNVGPIYLCPVPAFFTKNQTSTVCLLCELMACSYYDNVVLRELYRRVVSYCQNNVKMVDRIQLVLADLLRECTSPLGAAHEDVARCGLEAPTSPGGDSDYHGLSGVDGALARPDPVFCHVLRQAGVTGIYKHFFCDPQCAGNIRVTNEAVLFGRLHPHHVQEVKLAICHDNYYISRLPRRVWLCITLFKAFQITKRTYKGKVHLADFMRDFTQLLESCDIKLVDPTYVIDKYV</sequence>
<organism>
    <name type="scientific">Human cytomegalovirus (strain AD169)</name>
    <name type="common">HHV-5</name>
    <name type="synonym">Human herpesvirus 5</name>
    <dbReference type="NCBI Taxonomy" id="10360"/>
    <lineage>
        <taxon>Viruses</taxon>
        <taxon>Duplodnaviria</taxon>
        <taxon>Heunggongvirae</taxon>
        <taxon>Peploviricota</taxon>
        <taxon>Herviviricetes</taxon>
        <taxon>Herpesvirales</taxon>
        <taxon>Orthoherpesviridae</taxon>
        <taxon>Betaherpesvirinae</taxon>
        <taxon>Cytomegalovirus</taxon>
        <taxon>Cytomegalovirus humanbeta5</taxon>
        <taxon>Human cytomegalovirus</taxon>
    </lineage>
</organism>
<reference key="1">
    <citation type="journal article" date="1987" name="Virology">
        <title>Large-scale rearrangement of homologous regions in the genomes of HCMV and EBV.</title>
        <authorList>
            <person name="Kouzarides T."/>
            <person name="Bankier A.T."/>
            <person name="Satchwell S.C."/>
            <person name="Weston K.M."/>
            <person name="Tomlinson P."/>
            <person name="Barrell B.G."/>
        </authorList>
    </citation>
    <scope>NUCLEOTIDE SEQUENCE [GENOMIC DNA]</scope>
</reference>
<reference key="2">
    <citation type="journal article" date="1990" name="Curr. Top. Microbiol. Immunol.">
        <title>Analysis of the protein-coding content of the sequence of human cytomegalovirus strain AD169.</title>
        <authorList>
            <person name="Chee M.S."/>
            <person name="Bankier A.T."/>
            <person name="Beck S."/>
            <person name="Bohni R."/>
            <person name="Brown C.M."/>
            <person name="Cerny R."/>
            <person name="Horsnell T."/>
            <person name="Hutchison C.A. III"/>
            <person name="Kouzarides T."/>
            <person name="Martignetti J.A."/>
            <person name="Preddie E."/>
            <person name="Satchwell S.C."/>
            <person name="Tomlinson P."/>
            <person name="Weston K.M."/>
            <person name="Barrell B.G."/>
        </authorList>
    </citation>
    <scope>NUCLEOTIDE SEQUENCE [LARGE SCALE GENOMIC DNA]</scope>
</reference>
<reference key="3">
    <citation type="journal article" date="2003" name="J. Gen. Virol.">
        <title>The human cytomegalovirus genome revisited: comparison with the chimpanzee cytomegalovirus genome.</title>
        <authorList>
            <person name="Davison A.J."/>
            <person name="Dolan A."/>
            <person name="Akter P."/>
            <person name="Addison C."/>
            <person name="Dargan D.J."/>
            <person name="Alcendor D.J."/>
            <person name="McGeoch D.J."/>
            <person name="Hayward G.S."/>
        </authorList>
    </citation>
    <scope>GENOME REANNOTATION</scope>
</reference>
<reference key="4">
    <citation type="journal article" date="2003" name="J. Gen. Virol.">
        <authorList>
            <person name="Davison A.J."/>
            <person name="Dolan A."/>
            <person name="Akter P."/>
            <person name="Addison C."/>
            <person name="Dargan D.J."/>
            <person name="Alcendor D.J."/>
            <person name="McGeoch D.J."/>
            <person name="Hayward G.S."/>
        </authorList>
    </citation>
    <scope>ERRATUM OF PUBMED:12533697</scope>
</reference>
<reference key="5">
    <citation type="journal article" date="2008" name="J. Virol.">
        <title>The essential human cytomegalovirus gene UL52 is required for cleavage-packaging of the viral genome.</title>
        <authorList>
            <person name="Borst E.M."/>
            <person name="Wagner K."/>
            <person name="Binz A."/>
            <person name="Sodeik B."/>
            <person name="Messerle M."/>
        </authorList>
    </citation>
    <scope>FUNCTION</scope>
    <scope>SUBCELLULAR LOCATION</scope>
</reference>
<comment type="function">
    <text evidence="3">Plays a role in efficient localization of neo-synthesized capsids to nuclear replication compartments, thereby controlling cleavage and packaging of virus genomic DNA.</text>
</comment>
<comment type="subcellular location">
    <subcellularLocation>
        <location evidence="3">Host cytoplasm</location>
    </subcellularLocation>
    <subcellularLocation>
        <location evidence="3">Host nucleus</location>
    </subcellularLocation>
</comment>
<comment type="similarity">
    <text evidence="4">Belongs to the herpesviridae UL32 protein family.</text>
</comment>
<comment type="caution">
    <text evidence="4">Was originally thought to be an envelope glycoprotein.</text>
</comment>